<proteinExistence type="evidence at transcript level"/>
<accession>P15744</accession>
<organism>
    <name type="scientific">Eimeria tenella</name>
    <name type="common">Coccidian parasite</name>
    <dbReference type="NCBI Taxonomy" id="5802"/>
    <lineage>
        <taxon>Eukaryota</taxon>
        <taxon>Sar</taxon>
        <taxon>Alveolata</taxon>
        <taxon>Apicomplexa</taxon>
        <taxon>Conoidasida</taxon>
        <taxon>Coccidia</taxon>
        <taxon>Eucoccidiorida</taxon>
        <taxon>Eimeriorina</taxon>
        <taxon>Eimeriidae</taxon>
        <taxon>Eimeria</taxon>
    </lineage>
</organism>
<name>ANSP_EIMTE</name>
<reference key="1">
    <citation type="journal article" date="1989" name="Nucleic Acids Res.">
        <title>Tandem trinucleotide repeats throughout the nucleotide sequence of a cDNA encoding an Eimeria tenella sporozoite antigen.</title>
        <authorList>
            <person name="Liberator P.A."/>
            <person name="Hsu J."/>
            <person name="Turner M.J."/>
        </authorList>
    </citation>
    <scope>NUCLEOTIDE SEQUENCE [MRNA]</scope>
    <source>
        <strain>LS18</strain>
    </source>
</reference>
<protein>
    <recommendedName>
        <fullName>Sporozoite antigen</fullName>
    </recommendedName>
</protein>
<evidence type="ECO:0000256" key="1">
    <source>
        <dbReference type="SAM" id="MobiDB-lite"/>
    </source>
</evidence>
<evidence type="ECO:0000305" key="2"/>
<sequence length="216" mass="22369">MADLFSGLVGGVVGAVAAADLPAEGERAPRPAPGTAWTCCCSKLQEGARELEGFVQQLSFVAGKLACCLRVGAEQLARCAAEGRLPSSSSSSSCCALLQLEKQDLEQSLEAGKQGAECLLRSSKLALEALLEGARVAATRGLLLVESSKDTVLRSIPHTQEKLAQAYSSFLRGYQGAAAGRSLGYGAPAAAYGQQQQPSSYGAPPASSQQPSGFFW</sequence>
<feature type="chain" id="PRO_0000064602" description="Sporozoite antigen">
    <location>
        <begin position="1"/>
        <end position="216"/>
    </location>
</feature>
<feature type="region of interest" description="Disordered" evidence="1">
    <location>
        <begin position="194"/>
        <end position="216"/>
    </location>
</feature>
<comment type="sequence caution" evidence="2">
    <conflict type="erroneous initiation">
        <sequence resource="EMBL-CDS" id="CAA33905"/>
    </conflict>
</comment>
<dbReference type="EMBL" id="X15898">
    <property type="protein sequence ID" value="CAA33905.1"/>
    <property type="status" value="ALT_INIT"/>
    <property type="molecule type" value="mRNA"/>
</dbReference>
<dbReference type="PIR" id="S05575">
    <property type="entry name" value="S05575"/>
</dbReference>
<dbReference type="RefSeq" id="XP_013234903.1">
    <property type="nucleotide sequence ID" value="XM_013379449.1"/>
</dbReference>
<dbReference type="GeneID" id="25249599"/>
<dbReference type="VEuPathDB" id="ToxoDB:ETH2_1246800"/>
<dbReference type="VEuPathDB" id="ToxoDB:ETH_00001920"/>
<dbReference type="OrthoDB" id="354688at2759"/>